<comment type="catalytic activity">
    <reaction evidence="1">
        <text>sulfate + ATP + H(+) = adenosine 5'-phosphosulfate + diphosphate</text>
        <dbReference type="Rhea" id="RHEA:18133"/>
        <dbReference type="ChEBI" id="CHEBI:15378"/>
        <dbReference type="ChEBI" id="CHEBI:16189"/>
        <dbReference type="ChEBI" id="CHEBI:30616"/>
        <dbReference type="ChEBI" id="CHEBI:33019"/>
        <dbReference type="ChEBI" id="CHEBI:58243"/>
        <dbReference type="EC" id="2.7.7.4"/>
    </reaction>
</comment>
<comment type="pathway">
    <text evidence="1">Sulfur metabolism; hydrogen sulfide biosynthesis; sulfite from sulfate: step 1/3.</text>
</comment>
<comment type="similarity">
    <text evidence="1">Belongs to the sulfate adenylyltransferase family.</text>
</comment>
<protein>
    <recommendedName>
        <fullName evidence="1">Sulfate adenylyltransferase</fullName>
        <ecNumber evidence="1">2.7.7.4</ecNumber>
    </recommendedName>
    <alternativeName>
        <fullName evidence="1">ATP-sulfurylase</fullName>
    </alternativeName>
    <alternativeName>
        <fullName evidence="1">Sulfate adenylate transferase</fullName>
        <shortName evidence="1">SAT</shortName>
    </alternativeName>
</protein>
<keyword id="KW-0067">ATP-binding</keyword>
<keyword id="KW-0547">Nucleotide-binding</keyword>
<keyword id="KW-0548">Nucleotidyltransferase</keyword>
<keyword id="KW-0808">Transferase</keyword>
<sequence length="378" mass="42574">MSTVNELVNLVDETYDISQIEKEIGLDNIALSDLELLATGGYSSLTGFLGKKDYDSVVETLRLDNGSVWSIPITLPVTEEVAKSLKSGEEVKFVNGGNVYGVIQIEDIFVPDKEKEALLVYKTTDEAHPGVKKLYERPNVYVGGAIVLTKRFENNPFPSYHLDPIETREEFKKRGWKTVVGFQTRNPVHRAHEYIQKSALEIVDGLFLNPLVGETKSDDIPADVRMESYEVLLQNYYPKDRVFLSVFPAAMRYAGPREAIFHALVRKNFGCTHFIVGRDHAGVGDYYGTYEAQEIFTNFTVEELGITPLFFEHSFYCTKCEAMASTKTCPHGKEDHVILSGTKVRELLRNGEIPPSTFSRKEVVEVLIKGLKKEVVTE</sequence>
<dbReference type="EC" id="2.7.7.4" evidence="1"/>
<dbReference type="EMBL" id="CP001598">
    <property type="protein sequence ID" value="ACQ47039.1"/>
    <property type="molecule type" value="Genomic_DNA"/>
</dbReference>
<dbReference type="RefSeq" id="WP_000108778.1">
    <property type="nucleotide sequence ID" value="NC_012659.1"/>
</dbReference>
<dbReference type="SMR" id="C3P517"/>
<dbReference type="GeneID" id="45021421"/>
<dbReference type="KEGG" id="bai:BAA_1511"/>
<dbReference type="HOGENOM" id="CLU_022950_1_1_9"/>
<dbReference type="UniPathway" id="UPA00140">
    <property type="reaction ID" value="UER00204"/>
</dbReference>
<dbReference type="GO" id="GO:0005524">
    <property type="term" value="F:ATP binding"/>
    <property type="evidence" value="ECO:0007669"/>
    <property type="project" value="UniProtKB-KW"/>
</dbReference>
<dbReference type="GO" id="GO:0004781">
    <property type="term" value="F:sulfate adenylyltransferase (ATP) activity"/>
    <property type="evidence" value="ECO:0007669"/>
    <property type="project" value="UniProtKB-UniRule"/>
</dbReference>
<dbReference type="GO" id="GO:0070814">
    <property type="term" value="P:hydrogen sulfide biosynthetic process"/>
    <property type="evidence" value="ECO:0007669"/>
    <property type="project" value="UniProtKB-UniRule"/>
</dbReference>
<dbReference type="GO" id="GO:0000103">
    <property type="term" value="P:sulfate assimilation"/>
    <property type="evidence" value="ECO:0007669"/>
    <property type="project" value="UniProtKB-UniRule"/>
</dbReference>
<dbReference type="CDD" id="cd00517">
    <property type="entry name" value="ATPS"/>
    <property type="match status" value="1"/>
</dbReference>
<dbReference type="Gene3D" id="3.40.50.620">
    <property type="entry name" value="HUPs"/>
    <property type="match status" value="1"/>
</dbReference>
<dbReference type="Gene3D" id="3.10.400.10">
    <property type="entry name" value="Sulfate adenylyltransferase"/>
    <property type="match status" value="1"/>
</dbReference>
<dbReference type="HAMAP" id="MF_00066">
    <property type="entry name" value="Sulf_adenylyltr"/>
    <property type="match status" value="1"/>
</dbReference>
<dbReference type="InterPro" id="IPR025980">
    <property type="entry name" value="ATP-Sase_PUA-like_dom"/>
</dbReference>
<dbReference type="InterPro" id="IPR015947">
    <property type="entry name" value="PUA-like_sf"/>
</dbReference>
<dbReference type="InterPro" id="IPR014729">
    <property type="entry name" value="Rossmann-like_a/b/a_fold"/>
</dbReference>
<dbReference type="InterPro" id="IPR020792">
    <property type="entry name" value="SO4_adenylyltransferase_pro"/>
</dbReference>
<dbReference type="InterPro" id="IPR024951">
    <property type="entry name" value="Sulfurylase_cat_dom"/>
</dbReference>
<dbReference type="InterPro" id="IPR002650">
    <property type="entry name" value="Sulphate_adenylyltransferase"/>
</dbReference>
<dbReference type="NCBIfam" id="NF003166">
    <property type="entry name" value="PRK04149.1"/>
    <property type="match status" value="1"/>
</dbReference>
<dbReference type="NCBIfam" id="TIGR00339">
    <property type="entry name" value="sopT"/>
    <property type="match status" value="1"/>
</dbReference>
<dbReference type="PANTHER" id="PTHR43509">
    <property type="match status" value="1"/>
</dbReference>
<dbReference type="PANTHER" id="PTHR43509:SF1">
    <property type="entry name" value="SULFATE ADENYLYLTRANSFERASE"/>
    <property type="match status" value="1"/>
</dbReference>
<dbReference type="Pfam" id="PF01747">
    <property type="entry name" value="ATP-sulfurylase"/>
    <property type="match status" value="1"/>
</dbReference>
<dbReference type="Pfam" id="PF14306">
    <property type="entry name" value="PUA_2"/>
    <property type="match status" value="1"/>
</dbReference>
<dbReference type="SUPFAM" id="SSF52374">
    <property type="entry name" value="Nucleotidylyl transferase"/>
    <property type="match status" value="1"/>
</dbReference>
<dbReference type="SUPFAM" id="SSF88697">
    <property type="entry name" value="PUA domain-like"/>
    <property type="match status" value="1"/>
</dbReference>
<evidence type="ECO:0000255" key="1">
    <source>
        <dbReference type="HAMAP-Rule" id="MF_00066"/>
    </source>
</evidence>
<name>SAT_BACAA</name>
<organism>
    <name type="scientific">Bacillus anthracis (strain A0248)</name>
    <dbReference type="NCBI Taxonomy" id="592021"/>
    <lineage>
        <taxon>Bacteria</taxon>
        <taxon>Bacillati</taxon>
        <taxon>Bacillota</taxon>
        <taxon>Bacilli</taxon>
        <taxon>Bacillales</taxon>
        <taxon>Bacillaceae</taxon>
        <taxon>Bacillus</taxon>
        <taxon>Bacillus cereus group</taxon>
    </lineage>
</organism>
<accession>C3P517</accession>
<reference key="1">
    <citation type="submission" date="2009-04" db="EMBL/GenBank/DDBJ databases">
        <title>Genome sequence of Bacillus anthracis A0248.</title>
        <authorList>
            <person name="Dodson R.J."/>
            <person name="Munk A.C."/>
            <person name="Bruce D."/>
            <person name="Detter C."/>
            <person name="Tapia R."/>
            <person name="Sutton G."/>
            <person name="Sims D."/>
            <person name="Brettin T."/>
        </authorList>
    </citation>
    <scope>NUCLEOTIDE SEQUENCE [LARGE SCALE GENOMIC DNA]</scope>
    <source>
        <strain>A0248</strain>
    </source>
</reference>
<feature type="chain" id="PRO_1000117960" description="Sulfate adenylyltransferase">
    <location>
        <begin position="1"/>
        <end position="378"/>
    </location>
</feature>
<gene>
    <name evidence="1" type="primary">sat</name>
    <name type="ordered locus">BAA_1511</name>
</gene>
<proteinExistence type="inferred from homology"/>